<evidence type="ECO:0000255" key="1">
    <source>
        <dbReference type="HAMAP-Rule" id="MF_04066"/>
    </source>
</evidence>
<evidence type="ECO:0000256" key="2">
    <source>
        <dbReference type="SAM" id="MobiDB-lite"/>
    </source>
</evidence>
<keyword id="KW-0025">Alternative splicing</keyword>
<keyword id="KW-1262">Eukaryotic host gene expression shutoff by virus</keyword>
<keyword id="KW-1035">Host cytoplasm</keyword>
<keyword id="KW-1190">Host gene expression shutoff by virus</keyword>
<keyword id="KW-1192">Host mRNA suppression by virus</keyword>
<keyword id="KW-1048">Host nucleus</keyword>
<keyword id="KW-0945">Host-virus interaction</keyword>
<keyword id="KW-1090">Inhibition of host innate immune response by virus</keyword>
<keyword id="KW-1114">Inhibition of host interferon signaling pathway by virus</keyword>
<keyword id="KW-1102">Inhibition of host PKR by virus</keyword>
<keyword id="KW-1103">Inhibition of host pre-mRNA processing by virus</keyword>
<keyword id="KW-1088">Inhibition of host RIG-I by virus</keyword>
<keyword id="KW-1113">Inhibition of host RLR pathway by virus</keyword>
<keyword id="KW-0922">Interferon antiviral system evasion</keyword>
<keyword id="KW-0694">RNA-binding</keyword>
<keyword id="KW-0832">Ubl conjugation</keyword>
<keyword id="KW-0899">Viral immunoevasion</keyword>
<gene>
    <name evidence="1" type="primary">NS</name>
</gene>
<organismHost>
    <name type="scientific">Aves</name>
    <dbReference type="NCBI Taxonomy" id="8782"/>
</organismHost>
<organism>
    <name type="scientific">Influenza A virus (strain A/Gull/Massachusetts/26/1980 H13N6)</name>
    <dbReference type="NCBI Taxonomy" id="385626"/>
    <lineage>
        <taxon>Viruses</taxon>
        <taxon>Riboviria</taxon>
        <taxon>Orthornavirae</taxon>
        <taxon>Negarnaviricota</taxon>
        <taxon>Polyploviricotina</taxon>
        <taxon>Insthoviricetes</taxon>
        <taxon>Articulavirales</taxon>
        <taxon>Orthomyxoviridae</taxon>
        <taxon>Alphainfluenzavirus</taxon>
        <taxon>Alphainfluenzavirus influenzae</taxon>
        <taxon>Influenza A virus</taxon>
    </lineage>
</organism>
<name>NS1_I80AC</name>
<reference key="1">
    <citation type="journal article" date="1998" name="Virus Res.">
        <title>Multiple alignment comparison of the non-structural genes of influenza A viruses.</title>
        <authorList>
            <person name="Suarez D.L."/>
            <person name="Perdue M.L."/>
        </authorList>
    </citation>
    <scope>NUCLEOTIDE SEQUENCE [GENOMIC RNA]</scope>
</reference>
<protein>
    <recommendedName>
        <fullName evidence="1">Non-structural protein 1</fullName>
        <shortName evidence="1">NS1</shortName>
    </recommendedName>
    <alternativeName>
        <fullName evidence="1">NS1A</fullName>
    </alternativeName>
</protein>
<proteinExistence type="inferred from homology"/>
<comment type="function">
    <text evidence="1">Inhibits post-transcriptional processing of cellular pre-mRNA, by binding and inhibiting two cellular proteins that are required for the 3'-end processing of cellular pre-mRNAs: the 30 kDa cleavage and polyadenylation specificity factor/CPSF4 and the poly(A)-binding protein 2/PABPN1. In turn, unprocessed 3' end pre-mRNAs accumulate in the host nucleus and are no longer exported to the cytoplasm. Cellular protein synthesis is thereby shut off very early after virus infection. Viral protein synthesis is not affected by the inhibition of the cellular 3' end processing machinery because the poly(A) tails of viral mRNAs are produced by the viral polymerase through a stuttering mechanism. Prevents the establishment of the cellular antiviral state by inhibiting TRIM25-mediated RIGI ubiquitination, which normally triggers the antiviral transduction signal that leads to the activation of type I IFN genes by transcription factors IRF3 and IRF7. Also binds poly(A) and U6 snRNA. Inhibits the integrated stress response (ISR) in the infected cell by blocking dsRNA binding by EIF2AK2/PKR and further phosphorylation of EIF2S1/EIF-2ALPHA. Stress granule formation is thus inhibited, which allows protein synthesis and viral replication.</text>
</comment>
<comment type="subunit">
    <text evidence="1">Homodimer. Interacts with host TRIM25 (via coiled coil); this interaction specifically inhibits TRIM25 multimerization and TRIM25-mediated RIGI CARD ubiquitination. Interacts with human EIF2AK2/PKR, CPSF4, IVNS1ABP and PABPN1.</text>
</comment>
<comment type="subcellular location">
    <subcellularLocation>
        <location evidence="1">Host nucleus</location>
    </subcellularLocation>
    <subcellularLocation>
        <location evidence="1">Host cytoplasm</location>
    </subcellularLocation>
    <text evidence="1">In uninfected, transfected cells, NS1 is localized in the nucleus. Only in virus infected cells, the nuclear export signal is unveiled, presumably by a viral protein, and a fraction of NS1 is exported in the cytoplasm.</text>
</comment>
<comment type="alternative products">
    <event type="alternative splicing"/>
    <isoform>
        <id>O57306-1</id>
        <name>NS1</name>
        <sequence type="displayed"/>
    </isoform>
    <isoform>
        <id>P69265-1</id>
        <name>NEP</name>
        <name>NS2</name>
        <sequence type="external"/>
    </isoform>
</comment>
<comment type="domain">
    <text evidence="1">The dsRNA-binding region is required for suppression of RNA silencing.</text>
</comment>
<comment type="PTM">
    <text evidence="1">Upon interferon induction, ISGylated via host HERC5; this results in the impairment of NS1 interaction with RNA targets due to its inability to form homodimers and to interact with host EIF2AK2/PKR.</text>
</comment>
<comment type="similarity">
    <text evidence="1">Belongs to the influenza A viruses NS1 family.</text>
</comment>
<dbReference type="EMBL" id="U96744">
    <property type="protein sequence ID" value="AAB93947.1"/>
    <property type="molecule type" value="Genomic_RNA"/>
</dbReference>
<dbReference type="SMR" id="O57306"/>
<dbReference type="GO" id="GO:0030430">
    <property type="term" value="C:host cell cytoplasm"/>
    <property type="evidence" value="ECO:0007669"/>
    <property type="project" value="UniProtKB-SubCell"/>
</dbReference>
<dbReference type="GO" id="GO:0042025">
    <property type="term" value="C:host cell nucleus"/>
    <property type="evidence" value="ECO:0007669"/>
    <property type="project" value="UniProtKB-SubCell"/>
</dbReference>
<dbReference type="GO" id="GO:0030291">
    <property type="term" value="F:protein serine/threonine kinase inhibitor activity"/>
    <property type="evidence" value="ECO:0007669"/>
    <property type="project" value="UniProtKB-KW"/>
</dbReference>
<dbReference type="GO" id="GO:0003723">
    <property type="term" value="F:RNA binding"/>
    <property type="evidence" value="ECO:0007669"/>
    <property type="project" value="UniProtKB-KW"/>
</dbReference>
<dbReference type="GO" id="GO:0039540">
    <property type="term" value="P:symbiont-mediated suppression of host cytoplasmic pattern recognition receptor signaling pathway via inhibition of RIG-I activity"/>
    <property type="evidence" value="ECO:0007669"/>
    <property type="project" value="UniProtKB-KW"/>
</dbReference>
<dbReference type="GO" id="GO:0039657">
    <property type="term" value="P:symbiont-mediated suppression of host gene expression"/>
    <property type="evidence" value="ECO:0007669"/>
    <property type="project" value="UniProtKB-KW"/>
</dbReference>
<dbReference type="GO" id="GO:0039524">
    <property type="term" value="P:symbiont-mediated suppression of host mRNA processing"/>
    <property type="evidence" value="ECO:0007669"/>
    <property type="project" value="UniProtKB-KW"/>
</dbReference>
<dbReference type="GO" id="GO:0039580">
    <property type="term" value="P:symbiont-mediated suppression of host PKR/eIFalpha signaling"/>
    <property type="evidence" value="ECO:0007669"/>
    <property type="project" value="UniProtKB-KW"/>
</dbReference>
<dbReference type="GO" id="GO:0039502">
    <property type="term" value="P:symbiont-mediated suppression of host type I interferon-mediated signaling pathway"/>
    <property type="evidence" value="ECO:0007669"/>
    <property type="project" value="UniProtKB-KW"/>
</dbReference>
<dbReference type="FunFam" id="1.10.287.10:FF:000001">
    <property type="entry name" value="Non-structural protein 1"/>
    <property type="match status" value="1"/>
</dbReference>
<dbReference type="FunFam" id="3.30.420.330:FF:000001">
    <property type="entry name" value="Non-structural protein 1"/>
    <property type="match status" value="1"/>
</dbReference>
<dbReference type="Gene3D" id="3.30.420.330">
    <property type="entry name" value="Influenza virus non-structural protein, effector domain"/>
    <property type="match status" value="1"/>
</dbReference>
<dbReference type="Gene3D" id="1.10.287.10">
    <property type="entry name" value="S15/NS1, RNA-binding"/>
    <property type="match status" value="1"/>
</dbReference>
<dbReference type="HAMAP" id="MF_04066">
    <property type="entry name" value="INFV_NS1"/>
    <property type="match status" value="1"/>
</dbReference>
<dbReference type="InterPro" id="IPR004208">
    <property type="entry name" value="NS1"/>
</dbReference>
<dbReference type="InterPro" id="IPR000256">
    <property type="entry name" value="NS1A"/>
</dbReference>
<dbReference type="InterPro" id="IPR038064">
    <property type="entry name" value="NS1A_effect_dom-like_sf"/>
</dbReference>
<dbReference type="InterPro" id="IPR009068">
    <property type="entry name" value="uS15_NS1_RNA-bd_sf"/>
</dbReference>
<dbReference type="Pfam" id="PF00600">
    <property type="entry name" value="Flu_NS1"/>
    <property type="match status" value="1"/>
</dbReference>
<dbReference type="SUPFAM" id="SSF143021">
    <property type="entry name" value="Ns1 effector domain-like"/>
    <property type="match status" value="1"/>
</dbReference>
<dbReference type="SUPFAM" id="SSF47060">
    <property type="entry name" value="S15/NS1 RNA-binding domain"/>
    <property type="match status" value="1"/>
</dbReference>
<sequence length="230" mass="25822">MDSNTVSSFQVDCFLWHVRKRFADQEMGDAPFLDRIRRDQKSLKGRSITLGIDIEAATRAGKLIIERILDEESDEALKMNIASVPASRYVTDMTPEEMSRDWFMLMPKQKFAGPLCIRMDQAILDKNIVLKANFSVAFDRLETLILLRAFTSEGAIVGEISQLPSLPGHTSEDVKNAIGILIGGLEWNDNTVRVSETLQRFAWGSSNENGRPPFAPKQERKMAGTVESEV</sequence>
<feature type="chain" id="PRO_0000324270" description="Non-structural protein 1">
    <location>
        <begin position="1"/>
        <end position="230"/>
    </location>
</feature>
<feature type="region of interest" description="RNA-binding and homodimerization" evidence="1">
    <location>
        <begin position="1"/>
        <end position="73"/>
    </location>
</feature>
<feature type="region of interest" description="CPSF4-binding" evidence="1">
    <location>
        <begin position="180"/>
        <end position="215"/>
    </location>
</feature>
<feature type="region of interest" description="Disordered" evidence="2">
    <location>
        <begin position="204"/>
        <end position="230"/>
    </location>
</feature>
<feature type="region of interest" description="PABPN1-binding" evidence="1">
    <location>
        <begin position="223"/>
        <end position="230"/>
    </location>
</feature>
<feature type="short sequence motif" description="Nuclear localization signal" evidence="1">
    <location>
        <begin position="34"/>
        <end position="38"/>
    </location>
</feature>
<feature type="short sequence motif" description="Nuclear export signal" evidence="1">
    <location>
        <begin position="137"/>
        <end position="146"/>
    </location>
</feature>
<accession>O57306</accession>